<protein>
    <recommendedName>
        <fullName evidence="1">Phosphoglucosamine mutase</fullName>
        <ecNumber evidence="1">5.4.2.10</ecNumber>
    </recommendedName>
</protein>
<dbReference type="EC" id="5.4.2.10" evidence="1"/>
<dbReference type="EMBL" id="CP000076">
    <property type="protein sequence ID" value="AAY96238.1"/>
    <property type="molecule type" value="Genomic_DNA"/>
</dbReference>
<dbReference type="RefSeq" id="WP_011059199.1">
    <property type="nucleotide sequence ID" value="NC_004129.6"/>
</dbReference>
<dbReference type="SMR" id="Q4KIG0"/>
<dbReference type="STRING" id="220664.PFL_0838"/>
<dbReference type="KEGG" id="pfl:PFL_0838"/>
<dbReference type="PATRIC" id="fig|220664.5.peg.859"/>
<dbReference type="eggNOG" id="COG1109">
    <property type="taxonomic scope" value="Bacteria"/>
</dbReference>
<dbReference type="HOGENOM" id="CLU_016950_7_0_6"/>
<dbReference type="Proteomes" id="UP000008540">
    <property type="component" value="Chromosome"/>
</dbReference>
<dbReference type="GO" id="GO:0005829">
    <property type="term" value="C:cytosol"/>
    <property type="evidence" value="ECO:0007669"/>
    <property type="project" value="TreeGrafter"/>
</dbReference>
<dbReference type="GO" id="GO:0000287">
    <property type="term" value="F:magnesium ion binding"/>
    <property type="evidence" value="ECO:0007669"/>
    <property type="project" value="UniProtKB-UniRule"/>
</dbReference>
<dbReference type="GO" id="GO:0008966">
    <property type="term" value="F:phosphoglucosamine mutase activity"/>
    <property type="evidence" value="ECO:0007669"/>
    <property type="project" value="UniProtKB-UniRule"/>
</dbReference>
<dbReference type="GO" id="GO:0004615">
    <property type="term" value="F:phosphomannomutase activity"/>
    <property type="evidence" value="ECO:0007669"/>
    <property type="project" value="TreeGrafter"/>
</dbReference>
<dbReference type="GO" id="GO:0005975">
    <property type="term" value="P:carbohydrate metabolic process"/>
    <property type="evidence" value="ECO:0007669"/>
    <property type="project" value="InterPro"/>
</dbReference>
<dbReference type="GO" id="GO:0009252">
    <property type="term" value="P:peptidoglycan biosynthetic process"/>
    <property type="evidence" value="ECO:0007669"/>
    <property type="project" value="TreeGrafter"/>
</dbReference>
<dbReference type="GO" id="GO:0006048">
    <property type="term" value="P:UDP-N-acetylglucosamine biosynthetic process"/>
    <property type="evidence" value="ECO:0007669"/>
    <property type="project" value="TreeGrafter"/>
</dbReference>
<dbReference type="CDD" id="cd05802">
    <property type="entry name" value="GlmM"/>
    <property type="match status" value="1"/>
</dbReference>
<dbReference type="FunFam" id="3.30.310.50:FF:000001">
    <property type="entry name" value="Phosphoglucosamine mutase"/>
    <property type="match status" value="1"/>
</dbReference>
<dbReference type="FunFam" id="3.40.120.10:FF:000001">
    <property type="entry name" value="Phosphoglucosamine mutase"/>
    <property type="match status" value="1"/>
</dbReference>
<dbReference type="FunFam" id="3.40.120.10:FF:000003">
    <property type="entry name" value="Phosphoglucosamine mutase"/>
    <property type="match status" value="1"/>
</dbReference>
<dbReference type="Gene3D" id="3.40.120.10">
    <property type="entry name" value="Alpha-D-Glucose-1,6-Bisphosphate, subunit A, domain 3"/>
    <property type="match status" value="3"/>
</dbReference>
<dbReference type="Gene3D" id="3.30.310.50">
    <property type="entry name" value="Alpha-D-phosphohexomutase, C-terminal domain"/>
    <property type="match status" value="1"/>
</dbReference>
<dbReference type="HAMAP" id="MF_01554_B">
    <property type="entry name" value="GlmM_B"/>
    <property type="match status" value="1"/>
</dbReference>
<dbReference type="InterPro" id="IPR005844">
    <property type="entry name" value="A-D-PHexomutase_a/b/a-I"/>
</dbReference>
<dbReference type="InterPro" id="IPR016055">
    <property type="entry name" value="A-D-PHexomutase_a/b/a-I/II/III"/>
</dbReference>
<dbReference type="InterPro" id="IPR005845">
    <property type="entry name" value="A-D-PHexomutase_a/b/a-II"/>
</dbReference>
<dbReference type="InterPro" id="IPR005846">
    <property type="entry name" value="A-D-PHexomutase_a/b/a-III"/>
</dbReference>
<dbReference type="InterPro" id="IPR005843">
    <property type="entry name" value="A-D-PHexomutase_C"/>
</dbReference>
<dbReference type="InterPro" id="IPR036900">
    <property type="entry name" value="A-D-PHexomutase_C_sf"/>
</dbReference>
<dbReference type="InterPro" id="IPR016066">
    <property type="entry name" value="A-D-PHexomutase_CS"/>
</dbReference>
<dbReference type="InterPro" id="IPR005841">
    <property type="entry name" value="Alpha-D-phosphohexomutase_SF"/>
</dbReference>
<dbReference type="InterPro" id="IPR006352">
    <property type="entry name" value="GlmM_bact"/>
</dbReference>
<dbReference type="InterPro" id="IPR050060">
    <property type="entry name" value="Phosphoglucosamine_mutase"/>
</dbReference>
<dbReference type="NCBIfam" id="TIGR01455">
    <property type="entry name" value="glmM"/>
    <property type="match status" value="1"/>
</dbReference>
<dbReference type="NCBIfam" id="NF008139">
    <property type="entry name" value="PRK10887.1"/>
    <property type="match status" value="1"/>
</dbReference>
<dbReference type="PANTHER" id="PTHR42946:SF1">
    <property type="entry name" value="PHOSPHOGLUCOMUTASE (ALPHA-D-GLUCOSE-1,6-BISPHOSPHATE-DEPENDENT)"/>
    <property type="match status" value="1"/>
</dbReference>
<dbReference type="PANTHER" id="PTHR42946">
    <property type="entry name" value="PHOSPHOHEXOSE MUTASE"/>
    <property type="match status" value="1"/>
</dbReference>
<dbReference type="Pfam" id="PF02878">
    <property type="entry name" value="PGM_PMM_I"/>
    <property type="match status" value="1"/>
</dbReference>
<dbReference type="Pfam" id="PF02879">
    <property type="entry name" value="PGM_PMM_II"/>
    <property type="match status" value="1"/>
</dbReference>
<dbReference type="Pfam" id="PF02880">
    <property type="entry name" value="PGM_PMM_III"/>
    <property type="match status" value="1"/>
</dbReference>
<dbReference type="Pfam" id="PF00408">
    <property type="entry name" value="PGM_PMM_IV"/>
    <property type="match status" value="1"/>
</dbReference>
<dbReference type="PRINTS" id="PR00509">
    <property type="entry name" value="PGMPMM"/>
</dbReference>
<dbReference type="SUPFAM" id="SSF55957">
    <property type="entry name" value="Phosphoglucomutase, C-terminal domain"/>
    <property type="match status" value="1"/>
</dbReference>
<dbReference type="SUPFAM" id="SSF53738">
    <property type="entry name" value="Phosphoglucomutase, first 3 domains"/>
    <property type="match status" value="3"/>
</dbReference>
<dbReference type="PROSITE" id="PS00710">
    <property type="entry name" value="PGM_PMM"/>
    <property type="match status" value="1"/>
</dbReference>
<organism>
    <name type="scientific">Pseudomonas fluorescens (strain ATCC BAA-477 / NRRL B-23932 / Pf-5)</name>
    <dbReference type="NCBI Taxonomy" id="220664"/>
    <lineage>
        <taxon>Bacteria</taxon>
        <taxon>Pseudomonadati</taxon>
        <taxon>Pseudomonadota</taxon>
        <taxon>Gammaproteobacteria</taxon>
        <taxon>Pseudomonadales</taxon>
        <taxon>Pseudomonadaceae</taxon>
        <taxon>Pseudomonas</taxon>
    </lineage>
</organism>
<feature type="chain" id="PRO_0000147939" description="Phosphoglucosamine mutase">
    <location>
        <begin position="1"/>
        <end position="445"/>
    </location>
</feature>
<feature type="active site" description="Phosphoserine intermediate" evidence="1">
    <location>
        <position position="101"/>
    </location>
</feature>
<feature type="binding site" description="via phosphate group" evidence="1">
    <location>
        <position position="101"/>
    </location>
    <ligand>
        <name>Mg(2+)</name>
        <dbReference type="ChEBI" id="CHEBI:18420"/>
    </ligand>
</feature>
<feature type="binding site" evidence="1">
    <location>
        <position position="240"/>
    </location>
    <ligand>
        <name>Mg(2+)</name>
        <dbReference type="ChEBI" id="CHEBI:18420"/>
    </ligand>
</feature>
<feature type="binding site" evidence="1">
    <location>
        <position position="242"/>
    </location>
    <ligand>
        <name>Mg(2+)</name>
        <dbReference type="ChEBI" id="CHEBI:18420"/>
    </ligand>
</feature>
<feature type="binding site" evidence="1">
    <location>
        <position position="244"/>
    </location>
    <ligand>
        <name>Mg(2+)</name>
        <dbReference type="ChEBI" id="CHEBI:18420"/>
    </ligand>
</feature>
<feature type="modified residue" description="Phosphoserine" evidence="1">
    <location>
        <position position="101"/>
    </location>
</feature>
<reference key="1">
    <citation type="journal article" date="2005" name="Nat. Biotechnol.">
        <title>Complete genome sequence of the plant commensal Pseudomonas fluorescens Pf-5.</title>
        <authorList>
            <person name="Paulsen I.T."/>
            <person name="Press C.M."/>
            <person name="Ravel J."/>
            <person name="Kobayashi D.Y."/>
            <person name="Myers G.S.A."/>
            <person name="Mavrodi D.V."/>
            <person name="DeBoy R.T."/>
            <person name="Seshadri R."/>
            <person name="Ren Q."/>
            <person name="Madupu R."/>
            <person name="Dodson R.J."/>
            <person name="Durkin A.S."/>
            <person name="Brinkac L.M."/>
            <person name="Daugherty S.C."/>
            <person name="Sullivan S.A."/>
            <person name="Rosovitz M.J."/>
            <person name="Gwinn M.L."/>
            <person name="Zhou L."/>
            <person name="Schneider D.J."/>
            <person name="Cartinhour S.W."/>
            <person name="Nelson W.C."/>
            <person name="Weidman J."/>
            <person name="Watkins K."/>
            <person name="Tran K."/>
            <person name="Khouri H."/>
            <person name="Pierson E.A."/>
            <person name="Pierson L.S. III"/>
            <person name="Thomashow L.S."/>
            <person name="Loper J.E."/>
        </authorList>
    </citation>
    <scope>NUCLEOTIDE SEQUENCE [LARGE SCALE GENOMIC DNA]</scope>
    <source>
        <strain>ATCC BAA-477 / NRRL B-23932 / Pf-5</strain>
    </source>
</reference>
<sequence length="445" mass="47424">MTKKYFGTDGIRGRVGEFPITPDFMLKLGWAAGMAFRSMGACRVLVGKDTRISGYMFESALEAGLSAAGADVMLLGPMPTPAIAYLTRTFHAEAGIVISASHNPHDDNGIKFFSGEGTKLPDEVELMIEELLDAPMTVVESSKLGKVSRINDASGRYIEFCKSSVPSSTSFAGLKVVLDCAHGATYKVAPSVFRELGAQVTVLSAQPNGLNINENCGSTHMSQLQAAVLAEHADLGIAFDGDGDRVLMVDQTGAIVDGDELLFIIARDLHERDKLQGGVVGTLMSNLGLELALADLGIPFVRANVGDRYVIAELLERNWLVGGENSGHIVCFRHATTGDAIIAALQVLMALKARGESLAQSRQGLRKCPQVLVNVRFGGGENPVEHPAVKEACERVTAAMAGRGRVLLRKSGTEPLVRVMVEGDDEAQVRAYAEELAKLVAEVSA</sequence>
<keyword id="KW-0413">Isomerase</keyword>
<keyword id="KW-0460">Magnesium</keyword>
<keyword id="KW-0479">Metal-binding</keyword>
<keyword id="KW-0597">Phosphoprotein</keyword>
<accession>Q4KIG0</accession>
<name>GLMM_PSEF5</name>
<evidence type="ECO:0000255" key="1">
    <source>
        <dbReference type="HAMAP-Rule" id="MF_01554"/>
    </source>
</evidence>
<comment type="function">
    <text evidence="1">Catalyzes the conversion of glucosamine-6-phosphate to glucosamine-1-phosphate.</text>
</comment>
<comment type="catalytic activity">
    <reaction evidence="1">
        <text>alpha-D-glucosamine 1-phosphate = D-glucosamine 6-phosphate</text>
        <dbReference type="Rhea" id="RHEA:23424"/>
        <dbReference type="ChEBI" id="CHEBI:58516"/>
        <dbReference type="ChEBI" id="CHEBI:58725"/>
        <dbReference type="EC" id="5.4.2.10"/>
    </reaction>
</comment>
<comment type="cofactor">
    <cofactor evidence="1">
        <name>Mg(2+)</name>
        <dbReference type="ChEBI" id="CHEBI:18420"/>
    </cofactor>
    <text evidence="1">Binds 1 Mg(2+) ion per subunit.</text>
</comment>
<comment type="PTM">
    <text evidence="1">Activated by phosphorylation.</text>
</comment>
<comment type="similarity">
    <text evidence="1">Belongs to the phosphohexose mutase family.</text>
</comment>
<gene>
    <name evidence="1" type="primary">glmM</name>
    <name type="ordered locus">PFL_0838</name>
</gene>
<proteinExistence type="inferred from homology"/>